<feature type="chain" id="PRO_1000020075" description="Methionyl-tRNA formyltransferase">
    <location>
        <begin position="1"/>
        <end position="317"/>
    </location>
</feature>
<feature type="binding site" evidence="1">
    <location>
        <begin position="112"/>
        <end position="115"/>
    </location>
    <ligand>
        <name>(6S)-5,6,7,8-tetrahydrofolate</name>
        <dbReference type="ChEBI" id="CHEBI:57453"/>
    </ligand>
</feature>
<accession>Q0I182</accession>
<name>FMT_HISS1</name>
<protein>
    <recommendedName>
        <fullName evidence="1">Methionyl-tRNA formyltransferase</fullName>
        <ecNumber evidence="1">2.1.2.9</ecNumber>
    </recommendedName>
</protein>
<organism>
    <name type="scientific">Histophilus somni (strain 129Pt)</name>
    <name type="common">Haemophilus somnus</name>
    <dbReference type="NCBI Taxonomy" id="205914"/>
    <lineage>
        <taxon>Bacteria</taxon>
        <taxon>Pseudomonadati</taxon>
        <taxon>Pseudomonadota</taxon>
        <taxon>Gammaproteobacteria</taxon>
        <taxon>Pasteurellales</taxon>
        <taxon>Pasteurellaceae</taxon>
        <taxon>Histophilus</taxon>
    </lineage>
</organism>
<dbReference type="EC" id="2.1.2.9" evidence="1"/>
<dbReference type="EMBL" id="CP000436">
    <property type="protein sequence ID" value="ABI24321.1"/>
    <property type="molecule type" value="Genomic_DNA"/>
</dbReference>
<dbReference type="SMR" id="Q0I182"/>
<dbReference type="KEGG" id="hso:HS_0040"/>
<dbReference type="eggNOG" id="COG0223">
    <property type="taxonomic scope" value="Bacteria"/>
</dbReference>
<dbReference type="HOGENOM" id="CLU_033347_1_2_6"/>
<dbReference type="GO" id="GO:0005829">
    <property type="term" value="C:cytosol"/>
    <property type="evidence" value="ECO:0007669"/>
    <property type="project" value="TreeGrafter"/>
</dbReference>
<dbReference type="GO" id="GO:0004479">
    <property type="term" value="F:methionyl-tRNA formyltransferase activity"/>
    <property type="evidence" value="ECO:0007669"/>
    <property type="project" value="UniProtKB-UniRule"/>
</dbReference>
<dbReference type="CDD" id="cd08646">
    <property type="entry name" value="FMT_core_Met-tRNA-FMT_N"/>
    <property type="match status" value="1"/>
</dbReference>
<dbReference type="CDD" id="cd08704">
    <property type="entry name" value="Met_tRNA_FMT_C"/>
    <property type="match status" value="1"/>
</dbReference>
<dbReference type="FunFam" id="3.40.50.170:FF:000003">
    <property type="entry name" value="Methionyl-tRNA formyltransferase"/>
    <property type="match status" value="1"/>
</dbReference>
<dbReference type="Gene3D" id="3.10.25.10">
    <property type="entry name" value="Formyl transferase, C-terminal domain"/>
    <property type="match status" value="1"/>
</dbReference>
<dbReference type="Gene3D" id="3.40.50.170">
    <property type="entry name" value="Formyl transferase, N-terminal domain"/>
    <property type="match status" value="1"/>
</dbReference>
<dbReference type="HAMAP" id="MF_00182">
    <property type="entry name" value="Formyl_trans"/>
    <property type="match status" value="1"/>
</dbReference>
<dbReference type="InterPro" id="IPR005794">
    <property type="entry name" value="Fmt"/>
</dbReference>
<dbReference type="InterPro" id="IPR005793">
    <property type="entry name" value="Formyl_trans_C"/>
</dbReference>
<dbReference type="InterPro" id="IPR037022">
    <property type="entry name" value="Formyl_trans_C_sf"/>
</dbReference>
<dbReference type="InterPro" id="IPR002376">
    <property type="entry name" value="Formyl_transf_N"/>
</dbReference>
<dbReference type="InterPro" id="IPR036477">
    <property type="entry name" value="Formyl_transf_N_sf"/>
</dbReference>
<dbReference type="InterPro" id="IPR011034">
    <property type="entry name" value="Formyl_transferase-like_C_sf"/>
</dbReference>
<dbReference type="InterPro" id="IPR001555">
    <property type="entry name" value="GART_AS"/>
</dbReference>
<dbReference type="InterPro" id="IPR044135">
    <property type="entry name" value="Met-tRNA-FMT_C"/>
</dbReference>
<dbReference type="InterPro" id="IPR041711">
    <property type="entry name" value="Met-tRNA-FMT_N"/>
</dbReference>
<dbReference type="NCBIfam" id="TIGR00460">
    <property type="entry name" value="fmt"/>
    <property type="match status" value="1"/>
</dbReference>
<dbReference type="PANTHER" id="PTHR11138">
    <property type="entry name" value="METHIONYL-TRNA FORMYLTRANSFERASE"/>
    <property type="match status" value="1"/>
</dbReference>
<dbReference type="PANTHER" id="PTHR11138:SF5">
    <property type="entry name" value="METHIONYL-TRNA FORMYLTRANSFERASE, MITOCHONDRIAL"/>
    <property type="match status" value="1"/>
</dbReference>
<dbReference type="Pfam" id="PF02911">
    <property type="entry name" value="Formyl_trans_C"/>
    <property type="match status" value="1"/>
</dbReference>
<dbReference type="Pfam" id="PF00551">
    <property type="entry name" value="Formyl_trans_N"/>
    <property type="match status" value="1"/>
</dbReference>
<dbReference type="SUPFAM" id="SSF50486">
    <property type="entry name" value="FMT C-terminal domain-like"/>
    <property type="match status" value="1"/>
</dbReference>
<dbReference type="SUPFAM" id="SSF53328">
    <property type="entry name" value="Formyltransferase"/>
    <property type="match status" value="1"/>
</dbReference>
<dbReference type="PROSITE" id="PS00373">
    <property type="entry name" value="GART"/>
    <property type="match status" value="1"/>
</dbReference>
<reference key="1">
    <citation type="journal article" date="2007" name="J. Bacteriol.">
        <title>Complete genome sequence of Haemophilus somnus (Histophilus somni) strain 129Pt and comparison to Haemophilus ducreyi 35000HP and Haemophilus influenzae Rd.</title>
        <authorList>
            <person name="Challacombe J.F."/>
            <person name="Duncan A.J."/>
            <person name="Brettin T.S."/>
            <person name="Bruce D."/>
            <person name="Chertkov O."/>
            <person name="Detter J.C."/>
            <person name="Han C.S."/>
            <person name="Misra M."/>
            <person name="Richardson P."/>
            <person name="Tapia R."/>
            <person name="Thayer N."/>
            <person name="Xie G."/>
            <person name="Inzana T.J."/>
        </authorList>
    </citation>
    <scope>NUCLEOTIDE SEQUENCE [LARGE SCALE GENOMIC DNA]</scope>
    <source>
        <strain>129Pt</strain>
    </source>
</reference>
<comment type="function">
    <text evidence="1">Attaches a formyl group to the free amino group of methionyl-tRNA(fMet). The formyl group appears to play a dual role in the initiator identity of N-formylmethionyl-tRNA by promoting its recognition by IF2 and preventing the misappropriation of this tRNA by the elongation apparatus.</text>
</comment>
<comment type="catalytic activity">
    <reaction evidence="1">
        <text>L-methionyl-tRNA(fMet) + (6R)-10-formyltetrahydrofolate = N-formyl-L-methionyl-tRNA(fMet) + (6S)-5,6,7,8-tetrahydrofolate + H(+)</text>
        <dbReference type="Rhea" id="RHEA:24380"/>
        <dbReference type="Rhea" id="RHEA-COMP:9952"/>
        <dbReference type="Rhea" id="RHEA-COMP:9953"/>
        <dbReference type="ChEBI" id="CHEBI:15378"/>
        <dbReference type="ChEBI" id="CHEBI:57453"/>
        <dbReference type="ChEBI" id="CHEBI:78530"/>
        <dbReference type="ChEBI" id="CHEBI:78844"/>
        <dbReference type="ChEBI" id="CHEBI:195366"/>
        <dbReference type="EC" id="2.1.2.9"/>
    </reaction>
</comment>
<comment type="similarity">
    <text evidence="1">Belongs to the Fmt family.</text>
</comment>
<proteinExistence type="inferred from homology"/>
<evidence type="ECO:0000255" key="1">
    <source>
        <dbReference type="HAMAP-Rule" id="MF_00182"/>
    </source>
</evidence>
<keyword id="KW-0648">Protein biosynthesis</keyword>
<keyword id="KW-0808">Transferase</keyword>
<sequence length="317" mass="34886">MKPLNIIFAGTPDFAAQHLQALLQSQHNVLAVYTQPDKPAGRGQTLRASAVKILAEKHHIPVYQPKSLRKVEVQENLSKLNADVMVVVAYGLILPLAVLQTFPLGCLNVHGSLLPRWRGAAPIQRAIWAGDKKTGVTIMQMNEGLDTGDMLHKVCCDITPTETSTSLYTKLANIAPKALLEVLDGLEQSLFKAEVQDESLSNYAEKLSKEEAKLDWSLSAEQLERCIRAFNPWPMSYFVTQDSQGTLQTLKVYQASVLPHQDKPCGTILAADKRGIQVATANGVLNLEQLQPAGKKPMSARDLLNSRADWFKIGQVL</sequence>
<gene>
    <name evidence="1" type="primary">fmt</name>
    <name type="ordered locus">HS_0040</name>
</gene>